<evidence type="ECO:0000255" key="1">
    <source>
        <dbReference type="HAMAP-Rule" id="MF_00214"/>
    </source>
</evidence>
<sequence>MTHVEVVATIAPQLSIEETLIQKINHRIDAIDVLELRIDQIENVTVDQVAEMITKLKVMQDSFKLLVTYRTKLQGGYGQFTNDSYLNLISDLANINGIDMIDIEWQADIDIEKHQRIITHLQQYNKEVVISHHNFESTPPLDELQFIFFKMQKFNPEYVKLAVMPHNKNDVLNLLQAMSTFSDTMDCKVVGISMSKLGLISRTAQGVFGGALTYGCIGVPQAPGQIDVTDLKAQVTLY</sequence>
<keyword id="KW-0002">3D-structure</keyword>
<keyword id="KW-0028">Amino-acid biosynthesis</keyword>
<keyword id="KW-0057">Aromatic amino acid biosynthesis</keyword>
<keyword id="KW-0456">Lyase</keyword>
<keyword id="KW-1185">Reference proteome</keyword>
<keyword id="KW-0704">Schiff base</keyword>
<comment type="function">
    <text evidence="1">Involved in the third step of the chorismate pathway, which leads to the biosynthesis of aromatic amino acids. Catalyzes the cis-dehydration of 3-dehydroquinate (DHQ) and introduces the first double bond of the aromatic ring to yield 3-dehydroshikimate.</text>
</comment>
<comment type="catalytic activity">
    <reaction evidence="1">
        <text>3-dehydroquinate = 3-dehydroshikimate + H2O</text>
        <dbReference type="Rhea" id="RHEA:21096"/>
        <dbReference type="ChEBI" id="CHEBI:15377"/>
        <dbReference type="ChEBI" id="CHEBI:16630"/>
        <dbReference type="ChEBI" id="CHEBI:32364"/>
        <dbReference type="EC" id="4.2.1.10"/>
    </reaction>
</comment>
<comment type="pathway">
    <text evidence="1">Metabolic intermediate biosynthesis; chorismate biosynthesis; chorismate from D-erythrose 4-phosphate and phosphoenolpyruvate: step 3/7.</text>
</comment>
<comment type="subunit">
    <text evidence="1">Homodimer.</text>
</comment>
<comment type="similarity">
    <text evidence="1">Belongs to the type-I 3-dehydroquinase family.</text>
</comment>
<name>AROD_STAA8</name>
<dbReference type="EC" id="4.2.1.10" evidence="1"/>
<dbReference type="EMBL" id="CP000253">
    <property type="protein sequence ID" value="ABD29958.1"/>
    <property type="molecule type" value="Genomic_DNA"/>
</dbReference>
<dbReference type="RefSeq" id="WP_000150017.1">
    <property type="nucleotide sequence ID" value="NZ_LS483365.1"/>
</dbReference>
<dbReference type="RefSeq" id="YP_499386.1">
    <property type="nucleotide sequence ID" value="NC_007795.1"/>
</dbReference>
<dbReference type="PDB" id="6SFH">
    <property type="method" value="X-ray"/>
    <property type="resolution" value="1.73 A"/>
    <property type="chains" value="A/B=1-238"/>
</dbReference>
<dbReference type="PDBsum" id="6SFH"/>
<dbReference type="SMR" id="Q2G002"/>
<dbReference type="STRING" id="93061.SAOUHSC_00832"/>
<dbReference type="PaxDb" id="1280-SAXN108_0872"/>
<dbReference type="GeneID" id="3918944"/>
<dbReference type="KEGG" id="sao:SAOUHSC_00832"/>
<dbReference type="PATRIC" id="fig|93061.5.peg.752"/>
<dbReference type="eggNOG" id="COG0710">
    <property type="taxonomic scope" value="Bacteria"/>
</dbReference>
<dbReference type="HOGENOM" id="CLU_064444_2_1_9"/>
<dbReference type="OrthoDB" id="9813659at2"/>
<dbReference type="UniPathway" id="UPA00053">
    <property type="reaction ID" value="UER00086"/>
</dbReference>
<dbReference type="PRO" id="PR:Q2G002"/>
<dbReference type="Proteomes" id="UP000008816">
    <property type="component" value="Chromosome"/>
</dbReference>
<dbReference type="GO" id="GO:0003855">
    <property type="term" value="F:3-dehydroquinate dehydratase activity"/>
    <property type="evidence" value="ECO:0000318"/>
    <property type="project" value="GO_Central"/>
</dbReference>
<dbReference type="GO" id="GO:0046279">
    <property type="term" value="P:3,4-dihydroxybenzoate biosynthetic process"/>
    <property type="evidence" value="ECO:0000318"/>
    <property type="project" value="GO_Central"/>
</dbReference>
<dbReference type="GO" id="GO:0008652">
    <property type="term" value="P:amino acid biosynthetic process"/>
    <property type="evidence" value="ECO:0007669"/>
    <property type="project" value="UniProtKB-KW"/>
</dbReference>
<dbReference type="GO" id="GO:0009073">
    <property type="term" value="P:aromatic amino acid family biosynthetic process"/>
    <property type="evidence" value="ECO:0007669"/>
    <property type="project" value="UniProtKB-KW"/>
</dbReference>
<dbReference type="GO" id="GO:0009423">
    <property type="term" value="P:chorismate biosynthetic process"/>
    <property type="evidence" value="ECO:0007669"/>
    <property type="project" value="UniProtKB-UniRule"/>
</dbReference>
<dbReference type="CDD" id="cd00502">
    <property type="entry name" value="DHQase_I"/>
    <property type="match status" value="1"/>
</dbReference>
<dbReference type="FunFam" id="3.20.20.70:FF:000216">
    <property type="entry name" value="3-dehydroquinate dehydratase"/>
    <property type="match status" value="1"/>
</dbReference>
<dbReference type="Gene3D" id="3.20.20.70">
    <property type="entry name" value="Aldolase class I"/>
    <property type="match status" value="1"/>
</dbReference>
<dbReference type="HAMAP" id="MF_00214">
    <property type="entry name" value="AroD"/>
    <property type="match status" value="1"/>
</dbReference>
<dbReference type="InterPro" id="IPR013785">
    <property type="entry name" value="Aldolase_TIM"/>
</dbReference>
<dbReference type="InterPro" id="IPR001381">
    <property type="entry name" value="DHquinase_I"/>
</dbReference>
<dbReference type="InterPro" id="IPR050146">
    <property type="entry name" value="Type-I_3-dehydroquinase"/>
</dbReference>
<dbReference type="NCBIfam" id="TIGR01093">
    <property type="entry name" value="aroD"/>
    <property type="match status" value="1"/>
</dbReference>
<dbReference type="PANTHER" id="PTHR43699">
    <property type="entry name" value="3-DEHYDROQUINATE DEHYDRATASE"/>
    <property type="match status" value="1"/>
</dbReference>
<dbReference type="PANTHER" id="PTHR43699:SF1">
    <property type="entry name" value="3-DEHYDROQUINATE DEHYDRATASE"/>
    <property type="match status" value="1"/>
</dbReference>
<dbReference type="Pfam" id="PF01487">
    <property type="entry name" value="DHquinase_I"/>
    <property type="match status" value="1"/>
</dbReference>
<dbReference type="SUPFAM" id="SSF51569">
    <property type="entry name" value="Aldolase"/>
    <property type="match status" value="1"/>
</dbReference>
<reference key="1">
    <citation type="book" date="2006" name="Gram positive pathogens, 2nd edition">
        <title>The Staphylococcus aureus NCTC 8325 genome.</title>
        <editorList>
            <person name="Fischetti V."/>
            <person name="Novick R."/>
            <person name="Ferretti J."/>
            <person name="Portnoy D."/>
            <person name="Rood J."/>
        </editorList>
        <authorList>
            <person name="Gillaspy A.F."/>
            <person name="Worrell V."/>
            <person name="Orvis J."/>
            <person name="Roe B.A."/>
            <person name="Dyer D.W."/>
            <person name="Iandolo J.J."/>
        </authorList>
    </citation>
    <scope>NUCLEOTIDE SEQUENCE [LARGE SCALE GENOMIC DNA]</scope>
    <source>
        <strain>NCTC 8325 / PS 47</strain>
    </source>
</reference>
<feature type="chain" id="PRO_1000043187" description="3-dehydroquinate dehydratase">
    <location>
        <begin position="1"/>
        <end position="238"/>
    </location>
</feature>
<feature type="active site" description="Proton donor/acceptor" evidence="1">
    <location>
        <position position="133"/>
    </location>
</feature>
<feature type="active site" description="Schiff-base intermediate with substrate" evidence="1">
    <location>
        <position position="160"/>
    </location>
</feature>
<feature type="binding site" evidence="1">
    <location>
        <begin position="35"/>
        <end position="37"/>
    </location>
    <ligand>
        <name>3-dehydroquinate</name>
        <dbReference type="ChEBI" id="CHEBI:32364"/>
    </ligand>
</feature>
<feature type="binding site" evidence="1">
    <location>
        <position position="70"/>
    </location>
    <ligand>
        <name>3-dehydroquinate</name>
        <dbReference type="ChEBI" id="CHEBI:32364"/>
    </ligand>
</feature>
<feature type="binding site" evidence="1">
    <location>
        <position position="202"/>
    </location>
    <ligand>
        <name>3-dehydroquinate</name>
        <dbReference type="ChEBI" id="CHEBI:32364"/>
    </ligand>
</feature>
<feature type="binding site" evidence="1">
    <location>
        <position position="225"/>
    </location>
    <ligand>
        <name>3-dehydroquinate</name>
        <dbReference type="ChEBI" id="CHEBI:32364"/>
    </ligand>
</feature>
<gene>
    <name evidence="1" type="primary">aroD</name>
    <name type="ordered locus">SAOUHSC_00832</name>
</gene>
<protein>
    <recommendedName>
        <fullName evidence="1">3-dehydroquinate dehydratase</fullName>
        <shortName evidence="1">3-dehydroquinase</shortName>
        <ecNumber evidence="1">4.2.1.10</ecNumber>
    </recommendedName>
    <alternativeName>
        <fullName evidence="1">Type I DHQase</fullName>
    </alternativeName>
    <alternativeName>
        <fullName evidence="1">Type I dehydroquinase</fullName>
        <shortName evidence="1">DHQ1</shortName>
    </alternativeName>
</protein>
<organism>
    <name type="scientific">Staphylococcus aureus (strain NCTC 8325 / PS 47)</name>
    <dbReference type="NCBI Taxonomy" id="93061"/>
    <lineage>
        <taxon>Bacteria</taxon>
        <taxon>Bacillati</taxon>
        <taxon>Bacillota</taxon>
        <taxon>Bacilli</taxon>
        <taxon>Bacillales</taxon>
        <taxon>Staphylococcaceae</taxon>
        <taxon>Staphylococcus</taxon>
    </lineage>
</organism>
<accession>Q2G002</accession>
<proteinExistence type="evidence at protein level"/>